<feature type="chain" id="PRO_0000395299" description="Dipeptide permease D">
    <location>
        <begin position="1"/>
        <end position="493"/>
    </location>
</feature>
<feature type="transmembrane region" description="Helical" evidence="1">
    <location>
        <begin position="14"/>
        <end position="34"/>
    </location>
</feature>
<feature type="transmembrane region" description="Helical" evidence="1">
    <location>
        <begin position="49"/>
        <end position="69"/>
    </location>
</feature>
<feature type="transmembrane region" description="Helical" evidence="1">
    <location>
        <begin position="91"/>
        <end position="111"/>
    </location>
</feature>
<feature type="transmembrane region" description="Helical" evidence="1">
    <location>
        <begin position="138"/>
        <end position="158"/>
    </location>
</feature>
<feature type="transmembrane region" description="Helical" evidence="1">
    <location>
        <begin position="167"/>
        <end position="187"/>
    </location>
</feature>
<feature type="transmembrane region" description="Helical" evidence="1">
    <location>
        <begin position="212"/>
        <end position="232"/>
    </location>
</feature>
<feature type="transmembrane region" description="Helical" evidence="1">
    <location>
        <begin position="235"/>
        <end position="255"/>
    </location>
</feature>
<feature type="transmembrane region" description="Helical" evidence="1">
    <location>
        <begin position="267"/>
        <end position="287"/>
    </location>
</feature>
<feature type="transmembrane region" description="Helical" evidence="1">
    <location>
        <begin position="312"/>
        <end position="332"/>
    </location>
</feature>
<feature type="transmembrane region" description="Helical" evidence="1">
    <location>
        <begin position="344"/>
        <end position="364"/>
    </location>
</feature>
<feature type="transmembrane region" description="Helical" evidence="1">
    <location>
        <begin position="379"/>
        <end position="399"/>
    </location>
</feature>
<feature type="transmembrane region" description="Helical" evidence="1">
    <location>
        <begin position="413"/>
        <end position="433"/>
    </location>
</feature>
<feature type="transmembrane region" description="Helical" evidence="1">
    <location>
        <begin position="458"/>
        <end position="478"/>
    </location>
</feature>
<accession>C0PWD2</accession>
<organism>
    <name type="scientific">Salmonella paratyphi C (strain RKS4594)</name>
    <dbReference type="NCBI Taxonomy" id="476213"/>
    <lineage>
        <taxon>Bacteria</taxon>
        <taxon>Pseudomonadati</taxon>
        <taxon>Pseudomonadota</taxon>
        <taxon>Gammaproteobacteria</taxon>
        <taxon>Enterobacterales</taxon>
        <taxon>Enterobacteriaceae</taxon>
        <taxon>Salmonella</taxon>
    </lineage>
</organism>
<reference key="1">
    <citation type="journal article" date="2009" name="PLoS ONE">
        <title>Salmonella paratyphi C: genetic divergence from Salmonella choleraesuis and pathogenic convergence with Salmonella typhi.</title>
        <authorList>
            <person name="Liu W.-Q."/>
            <person name="Feng Y."/>
            <person name="Wang Y."/>
            <person name="Zou Q.-H."/>
            <person name="Chen F."/>
            <person name="Guo J.-T."/>
            <person name="Peng Y.-H."/>
            <person name="Jin Y."/>
            <person name="Li Y.-G."/>
            <person name="Hu S.-N."/>
            <person name="Johnston R.N."/>
            <person name="Liu G.-R."/>
            <person name="Liu S.-L."/>
        </authorList>
    </citation>
    <scope>NUCLEOTIDE SEQUENCE [LARGE SCALE GENOMIC DNA]</scope>
    <source>
        <strain>RKS4594</strain>
    </source>
</reference>
<comment type="function">
    <text evidence="1">Probable proton-dependent permease that transports dipeptides.</text>
</comment>
<comment type="subcellular location">
    <subcellularLocation>
        <location evidence="1">Cell inner membrane</location>
        <topology evidence="1">Multi-pass membrane protein</topology>
    </subcellularLocation>
</comment>
<comment type="similarity">
    <text evidence="1">Belongs to the major facilitator superfamily. Proton-dependent oligopeptide transporter (POT/PTR) (TC 2.A.17) family. DtpD subfamily.</text>
</comment>
<comment type="sequence caution" evidence="2">
    <conflict type="erroneous initiation">
        <sequence resource="EMBL-CDS" id="ACN44895"/>
    </conflict>
    <text>Extended N-terminus.</text>
</comment>
<protein>
    <recommendedName>
        <fullName evidence="1">Dipeptide permease D</fullName>
    </recommendedName>
</protein>
<evidence type="ECO:0000255" key="1">
    <source>
        <dbReference type="HAMAP-Rule" id="MF_01880"/>
    </source>
</evidence>
<evidence type="ECO:0000305" key="2"/>
<keyword id="KW-0997">Cell inner membrane</keyword>
<keyword id="KW-1003">Cell membrane</keyword>
<keyword id="KW-0472">Membrane</keyword>
<keyword id="KW-0571">Peptide transport</keyword>
<keyword id="KW-0653">Protein transport</keyword>
<keyword id="KW-0812">Transmembrane</keyword>
<keyword id="KW-1133">Transmembrane helix</keyword>
<keyword id="KW-0813">Transport</keyword>
<name>DTPD_SALPC</name>
<dbReference type="EMBL" id="CP000857">
    <property type="protein sequence ID" value="ACN44895.1"/>
    <property type="status" value="ALT_INIT"/>
    <property type="molecule type" value="Genomic_DNA"/>
</dbReference>
<dbReference type="RefSeq" id="WP_001041130.1">
    <property type="nucleotide sequence ID" value="NC_012125.1"/>
</dbReference>
<dbReference type="SMR" id="C0PWD2"/>
<dbReference type="KEGG" id="sei:SPC_0720"/>
<dbReference type="HOGENOM" id="CLU_004790_0_0_6"/>
<dbReference type="Proteomes" id="UP000001599">
    <property type="component" value="Chromosome"/>
</dbReference>
<dbReference type="GO" id="GO:0005886">
    <property type="term" value="C:plasma membrane"/>
    <property type="evidence" value="ECO:0007669"/>
    <property type="project" value="UniProtKB-SubCell"/>
</dbReference>
<dbReference type="GO" id="GO:0071916">
    <property type="term" value="F:dipeptide transmembrane transporter activity"/>
    <property type="evidence" value="ECO:0007669"/>
    <property type="project" value="UniProtKB-UniRule"/>
</dbReference>
<dbReference type="GO" id="GO:0015333">
    <property type="term" value="F:peptide:proton symporter activity"/>
    <property type="evidence" value="ECO:0007669"/>
    <property type="project" value="UniProtKB-UniRule"/>
</dbReference>
<dbReference type="GO" id="GO:0015031">
    <property type="term" value="P:protein transport"/>
    <property type="evidence" value="ECO:0007669"/>
    <property type="project" value="UniProtKB-KW"/>
</dbReference>
<dbReference type="CDD" id="cd17346">
    <property type="entry name" value="MFS_DtpA_like"/>
    <property type="match status" value="1"/>
</dbReference>
<dbReference type="FunFam" id="1.20.1250.20:FF:000035">
    <property type="entry name" value="Dipeptide permease D"/>
    <property type="match status" value="1"/>
</dbReference>
<dbReference type="Gene3D" id="1.20.1250.20">
    <property type="entry name" value="MFS general substrate transporter like domains"/>
    <property type="match status" value="1"/>
</dbReference>
<dbReference type="HAMAP" id="MF_01880">
    <property type="entry name" value="PTR2_DtpD_subfam"/>
    <property type="match status" value="1"/>
</dbReference>
<dbReference type="InterPro" id="IPR023777">
    <property type="entry name" value="AA/pep_transptr_DtpD"/>
</dbReference>
<dbReference type="InterPro" id="IPR005279">
    <property type="entry name" value="Dipep/tripep_permease"/>
</dbReference>
<dbReference type="InterPro" id="IPR020846">
    <property type="entry name" value="MFS_dom"/>
</dbReference>
<dbReference type="InterPro" id="IPR036259">
    <property type="entry name" value="MFS_trans_sf"/>
</dbReference>
<dbReference type="InterPro" id="IPR050171">
    <property type="entry name" value="MFS_Transporters"/>
</dbReference>
<dbReference type="InterPro" id="IPR000109">
    <property type="entry name" value="POT_fam"/>
</dbReference>
<dbReference type="InterPro" id="IPR018456">
    <property type="entry name" value="PTR2_symporter_CS"/>
</dbReference>
<dbReference type="NCBIfam" id="NF012006">
    <property type="entry name" value="PRK15462.1"/>
    <property type="match status" value="1"/>
</dbReference>
<dbReference type="NCBIfam" id="TIGR00924">
    <property type="entry name" value="yjdL_sub1_fam"/>
    <property type="match status" value="1"/>
</dbReference>
<dbReference type="PANTHER" id="PTHR23517:SF15">
    <property type="entry name" value="PROTON-DEPENDENT OLIGOPEPTIDE FAMILY TRANSPORT PROTEIN"/>
    <property type="match status" value="1"/>
</dbReference>
<dbReference type="PANTHER" id="PTHR23517">
    <property type="entry name" value="RESISTANCE PROTEIN MDTM, PUTATIVE-RELATED-RELATED"/>
    <property type="match status" value="1"/>
</dbReference>
<dbReference type="Pfam" id="PF00854">
    <property type="entry name" value="PTR2"/>
    <property type="match status" value="1"/>
</dbReference>
<dbReference type="SUPFAM" id="SSF103473">
    <property type="entry name" value="MFS general substrate transporter"/>
    <property type="match status" value="1"/>
</dbReference>
<dbReference type="PROSITE" id="PS50850">
    <property type="entry name" value="MFS"/>
    <property type="match status" value="1"/>
</dbReference>
<dbReference type="PROSITE" id="PS01022">
    <property type="entry name" value="PTR2_1"/>
    <property type="match status" value="1"/>
</dbReference>
<dbReference type="PROSITE" id="PS01023">
    <property type="entry name" value="PTR2_2"/>
    <property type="match status" value="1"/>
</dbReference>
<proteinExistence type="inferred from homology"/>
<sequence>MNKQASQPRAIYYVVALQIWEYFSFYGMRALLILYLTNQLKYDDNHAYELFSAYCSLVYVTPILGGYLADKVLGNRMAVMLGAFLMAIGHLVLGASEIAPTFLYLSLAIIVCGYGLFKSNISCLLGELYQPEDPRRDGGFSLLYAAGNIGSIVAPIACGYVQEEYSWAMGFALAAIGMLAGLVIFLCGNRHFTHTTGVNKAVLCARNYLLPNWGWLLILLVAAPLLITVLFWKEWSVYALIVATAISLVVLAKIYRQAQTAKQRKELGLIVTLTLFSMLFWAFAQQGGSSISLYIDRFVNRDILGYSVPTAMFQSVNAFAVMLCGVVLAWLVKESVSGNRTVRIWGKFALGLGLMSAGFCILTLSARWSAAYGHSSMPLMVLGLAVMGFAELFIDPVAMSQITRIDIPGVTGVLTGIYMLLSGAIANYLAGVIADQTSQSAFDASGAVNYAINAYVDVFEQITWGALACVGVVLLIWLYQSFKFKSRALAVES</sequence>
<gene>
    <name evidence="1" type="primary">dtpD</name>
    <name type="ordered locus">SPC_0720</name>
</gene>